<reference key="1">
    <citation type="journal article" date="2003" name="Nature">
        <title>The DNA sequence of human chromosome 7.</title>
        <authorList>
            <person name="Hillier L.W."/>
            <person name="Fulton R.S."/>
            <person name="Fulton L.A."/>
            <person name="Graves T.A."/>
            <person name="Pepin K.H."/>
            <person name="Wagner-McPherson C."/>
            <person name="Layman D."/>
            <person name="Maas J."/>
            <person name="Jaeger S."/>
            <person name="Walker R."/>
            <person name="Wylie K."/>
            <person name="Sekhon M."/>
            <person name="Becker M.C."/>
            <person name="O'Laughlin M.D."/>
            <person name="Schaller M.E."/>
            <person name="Fewell G.A."/>
            <person name="Delehaunty K.D."/>
            <person name="Miner T.L."/>
            <person name="Nash W.E."/>
            <person name="Cordes M."/>
            <person name="Du H."/>
            <person name="Sun H."/>
            <person name="Edwards J."/>
            <person name="Bradshaw-Cordum H."/>
            <person name="Ali J."/>
            <person name="Andrews S."/>
            <person name="Isak A."/>
            <person name="Vanbrunt A."/>
            <person name="Nguyen C."/>
            <person name="Du F."/>
            <person name="Lamar B."/>
            <person name="Courtney L."/>
            <person name="Kalicki J."/>
            <person name="Ozersky P."/>
            <person name="Bielicki L."/>
            <person name="Scott K."/>
            <person name="Holmes A."/>
            <person name="Harkins R."/>
            <person name="Harris A."/>
            <person name="Strong C.M."/>
            <person name="Hou S."/>
            <person name="Tomlinson C."/>
            <person name="Dauphin-Kohlberg S."/>
            <person name="Kozlowicz-Reilly A."/>
            <person name="Leonard S."/>
            <person name="Rohlfing T."/>
            <person name="Rock S.M."/>
            <person name="Tin-Wollam A.-M."/>
            <person name="Abbott A."/>
            <person name="Minx P."/>
            <person name="Maupin R."/>
            <person name="Strowmatt C."/>
            <person name="Latreille P."/>
            <person name="Miller N."/>
            <person name="Johnson D."/>
            <person name="Murray J."/>
            <person name="Woessner J.P."/>
            <person name="Wendl M.C."/>
            <person name="Yang S.-P."/>
            <person name="Schultz B.R."/>
            <person name="Wallis J.W."/>
            <person name="Spieth J."/>
            <person name="Bieri T.A."/>
            <person name="Nelson J.O."/>
            <person name="Berkowicz N."/>
            <person name="Wohldmann P.E."/>
            <person name="Cook L.L."/>
            <person name="Hickenbotham M.T."/>
            <person name="Eldred J."/>
            <person name="Williams D."/>
            <person name="Bedell J.A."/>
            <person name="Mardis E.R."/>
            <person name="Clifton S.W."/>
            <person name="Chissoe S.L."/>
            <person name="Marra M.A."/>
            <person name="Raymond C."/>
            <person name="Haugen E."/>
            <person name="Gillett W."/>
            <person name="Zhou Y."/>
            <person name="James R."/>
            <person name="Phelps K."/>
            <person name="Iadanoto S."/>
            <person name="Bubb K."/>
            <person name="Simms E."/>
            <person name="Levy R."/>
            <person name="Clendenning J."/>
            <person name="Kaul R."/>
            <person name="Kent W.J."/>
            <person name="Furey T.S."/>
            <person name="Baertsch R.A."/>
            <person name="Brent M.R."/>
            <person name="Keibler E."/>
            <person name="Flicek P."/>
            <person name="Bork P."/>
            <person name="Suyama M."/>
            <person name="Bailey J.A."/>
            <person name="Portnoy M.E."/>
            <person name="Torrents D."/>
            <person name="Chinwalla A.T."/>
            <person name="Gish W.R."/>
            <person name="Eddy S.R."/>
            <person name="McPherson J.D."/>
            <person name="Olson M.V."/>
            <person name="Eichler E.E."/>
            <person name="Green E.D."/>
            <person name="Waterston R.H."/>
            <person name="Wilson R.K."/>
        </authorList>
    </citation>
    <scope>NUCLEOTIDE SEQUENCE [LARGE SCALE GENOMIC DNA]</scope>
</reference>
<reference key="2">
    <citation type="journal article" date="2020" name="SLAS Discovery">
        <title>A Pilot Screen of a Novel Peptide Hormone Library Identified Candidate GPR83 Ligands.</title>
        <authorList>
            <person name="Sallee N.A."/>
            <person name="Lee E."/>
            <person name="Leffert A."/>
            <person name="Ramirez S."/>
            <person name="Brace A.D."/>
            <person name="Halenbeck R."/>
            <person name="Kavanaugh W.M."/>
            <person name="Sullivan K.M.C."/>
        </authorList>
    </citation>
    <scope>FUNCTION</scope>
    <scope>AMIDATION AT MET-112</scope>
    <scope>SUBCELLULAR LOCATION</scope>
</reference>
<dbReference type="EMBL" id="AC002064">
    <property type="status" value="NOT_ANNOTATED_CDS"/>
    <property type="molecule type" value="Genomic_DNA"/>
</dbReference>
<dbReference type="CCDS" id="CCDS94139.1"/>
<dbReference type="RefSeq" id="NP_001371166.1">
    <property type="nucleotide sequence ID" value="NM_001384237.2"/>
</dbReference>
<dbReference type="STRING" id="9606.ENSP00000490466"/>
<dbReference type="BioMuta" id="FAM237B"/>
<dbReference type="Ensembl" id="ENST00000637645.2">
    <property type="protein sequence ID" value="ENSP00000490466.1"/>
    <property type="gene ID" value="ENSG00000283267.2"/>
</dbReference>
<dbReference type="Ensembl" id="ENST00000692316.1">
    <property type="protein sequence ID" value="ENSP00000509180.1"/>
    <property type="gene ID" value="ENSG00000283267.2"/>
</dbReference>
<dbReference type="GeneID" id="107986818"/>
<dbReference type="MANE-Select" id="ENST00000692316.1">
    <property type="protein sequence ID" value="ENSP00000509180.1"/>
    <property type="RefSeq nucleotide sequence ID" value="NM_001384237.2"/>
    <property type="RefSeq protein sequence ID" value="NP_001371166.1"/>
</dbReference>
<dbReference type="AGR" id="HGNC:53217"/>
<dbReference type="GeneCards" id="FAM237B"/>
<dbReference type="HGNC" id="HGNC:53217">
    <property type="gene designation" value="FAM237B"/>
</dbReference>
<dbReference type="HPA" id="ENSG00000283267">
    <property type="expression patterns" value="Not detected"/>
</dbReference>
<dbReference type="neXtProt" id="NX_A0A1B0GVD1"/>
<dbReference type="VEuPathDB" id="HostDB:ENSG00000283267"/>
<dbReference type="GeneTree" id="ENSGT00390000015769"/>
<dbReference type="InParanoid" id="A0A1B0GVD1"/>
<dbReference type="OMA" id="DFMMFLK"/>
<dbReference type="OrthoDB" id="9931800at2759"/>
<dbReference type="PAN-GO" id="A0A1B0GVD1">
    <property type="GO annotations" value="0 GO annotations based on evolutionary models"/>
</dbReference>
<dbReference type="PRO" id="PR:A0A1B0GVD1"/>
<dbReference type="Proteomes" id="UP000005640">
    <property type="component" value="Chromosome 7"/>
</dbReference>
<dbReference type="RNAct" id="A0A1B0GVD1">
    <property type="molecule type" value="protein"/>
</dbReference>
<dbReference type="Bgee" id="ENSG00000283267">
    <property type="expression patterns" value="Expressed in right uterine tube and 45 other cell types or tissues"/>
</dbReference>
<dbReference type="GO" id="GO:0005576">
    <property type="term" value="C:extracellular region"/>
    <property type="evidence" value="ECO:0007669"/>
    <property type="project" value="UniProtKB-SubCell"/>
</dbReference>
<dbReference type="InterPro" id="IPR040439">
    <property type="entry name" value="FAM237A/B"/>
</dbReference>
<dbReference type="PANTHER" id="PTHR36690">
    <property type="entry name" value="PROTEIN FAM237A"/>
    <property type="match status" value="1"/>
</dbReference>
<dbReference type="PANTHER" id="PTHR36690:SF1">
    <property type="entry name" value="PROTEIN FAM237B"/>
    <property type="match status" value="1"/>
</dbReference>
<sequence>MCFATRRWFYLHLGCMMLINLVNADFEFQKGVLASISPGITKDIDLQCWKACSLTLIDLKELKIEHNVDAFWNFMLFLQKSQRPGHYNVFLNIAQDFWDMYVDCLLSRSHGMGRRQVMPPKYNFPQKITGGNLNVYLRE</sequence>
<feature type="signal peptide" evidence="4">
    <location>
        <begin position="1"/>
        <end position="24"/>
    </location>
</feature>
<feature type="chain" id="PRO_5008408679" description="Protein FAM237B" evidence="1">
    <location>
        <begin position="25"/>
        <end position="139"/>
    </location>
</feature>
<feature type="propeptide" id="PRO_0000457710" description="Removed in the mature form" evidence="2">
    <location>
        <begin position="113"/>
        <end position="139"/>
    </location>
</feature>
<feature type="modified residue" description="Methionine amide" evidence="4">
    <location>
        <position position="112"/>
    </location>
</feature>
<accession>A0A1B0GVD1</accession>
<gene>
    <name evidence="5" type="primary">FAM237B</name>
</gene>
<name>F237B_HUMAN</name>
<comment type="function">
    <text evidence="2">May be capable of activating GPR83 via the GNAQ signaling pathway.</text>
</comment>
<comment type="subcellular location">
    <subcellularLocation>
        <location evidence="4">Secreted</location>
    </subcellularLocation>
</comment>
<comment type="PTM">
    <text evidence="2">The active form requires C-terminal amidation and disulfide bond formation.</text>
</comment>
<keyword id="KW-0027">Amidation</keyword>
<keyword id="KW-1185">Reference proteome</keyword>
<keyword id="KW-0964">Secreted</keyword>
<keyword id="KW-0732">Signal</keyword>
<evidence type="ECO:0000255" key="1"/>
<evidence type="ECO:0000269" key="2">
    <source>
    </source>
</evidence>
<evidence type="ECO:0000305" key="3"/>
<evidence type="ECO:0000305" key="4">
    <source>
    </source>
</evidence>
<evidence type="ECO:0000312" key="5">
    <source>
        <dbReference type="HGNC" id="HGNC:53217"/>
    </source>
</evidence>
<organism>
    <name type="scientific">Homo sapiens</name>
    <name type="common">Human</name>
    <dbReference type="NCBI Taxonomy" id="9606"/>
    <lineage>
        <taxon>Eukaryota</taxon>
        <taxon>Metazoa</taxon>
        <taxon>Chordata</taxon>
        <taxon>Craniata</taxon>
        <taxon>Vertebrata</taxon>
        <taxon>Euteleostomi</taxon>
        <taxon>Mammalia</taxon>
        <taxon>Eutheria</taxon>
        <taxon>Euarchontoglires</taxon>
        <taxon>Primates</taxon>
        <taxon>Haplorrhini</taxon>
        <taxon>Catarrhini</taxon>
        <taxon>Hominidae</taxon>
        <taxon>Homo</taxon>
    </lineage>
</organism>
<protein>
    <recommendedName>
        <fullName evidence="3">Protein FAM237B</fullName>
    </recommendedName>
</protein>
<proteinExistence type="evidence at protein level"/>